<name>URK_VIBCH</name>
<sequence>MSENNQCVIVGIAGASASGKSLIASTIYNELRAKVGDHQIGVITEDCYYKDQSHLSMEERVKTNYDHPSALDHDLLCQHLQMLARGEAVEVPEYSYTEHTRTEQTTTMTPKKVIILEGILLLTDPRLRDLMHATVFMDTPLDICLLRRVKRDVQERGRTMESVLKQYQETVRPMFMQFIEPSKQYADIIVPRGGKNRIAIDVLKAHIAKLLKS</sequence>
<proteinExistence type="inferred from homology"/>
<protein>
    <recommendedName>
        <fullName evidence="1">Uridine kinase</fullName>
        <ecNumber evidence="1">2.7.1.48</ecNumber>
    </recommendedName>
    <alternativeName>
        <fullName evidence="1">Cytidine monophosphokinase</fullName>
    </alternativeName>
    <alternativeName>
        <fullName evidence="1">Uridine monophosphokinase</fullName>
    </alternativeName>
</protein>
<feature type="chain" id="PRO_0000164506" description="Uridine kinase">
    <location>
        <begin position="1"/>
        <end position="213"/>
    </location>
</feature>
<feature type="binding site" evidence="1">
    <location>
        <begin position="14"/>
        <end position="21"/>
    </location>
    <ligand>
        <name>ATP</name>
        <dbReference type="ChEBI" id="CHEBI:30616"/>
    </ligand>
</feature>
<dbReference type="EC" id="2.7.1.48" evidence="1"/>
<dbReference type="EMBL" id="AE003852">
    <property type="protein sequence ID" value="AAF94197.1"/>
    <property type="status" value="ALT_INIT"/>
    <property type="molecule type" value="Genomic_DNA"/>
</dbReference>
<dbReference type="PIR" id="F82249">
    <property type="entry name" value="F82249"/>
</dbReference>
<dbReference type="RefSeq" id="NP_230683.1">
    <property type="nucleotide sequence ID" value="NC_002505.1"/>
</dbReference>
<dbReference type="RefSeq" id="WP_001293736.1">
    <property type="nucleotide sequence ID" value="NZ_LT906614.1"/>
</dbReference>
<dbReference type="SMR" id="Q9KT67"/>
<dbReference type="STRING" id="243277.VC_1038"/>
<dbReference type="DNASU" id="2614308"/>
<dbReference type="EnsemblBacteria" id="AAF94197">
    <property type="protein sequence ID" value="AAF94197"/>
    <property type="gene ID" value="VC_1038"/>
</dbReference>
<dbReference type="GeneID" id="94014222"/>
<dbReference type="KEGG" id="vch:VC_1038"/>
<dbReference type="PATRIC" id="fig|243277.26.peg.990"/>
<dbReference type="eggNOG" id="COG0572">
    <property type="taxonomic scope" value="Bacteria"/>
</dbReference>
<dbReference type="HOGENOM" id="CLU_021278_1_2_6"/>
<dbReference type="UniPathway" id="UPA00574">
    <property type="reaction ID" value="UER00637"/>
</dbReference>
<dbReference type="UniPathway" id="UPA00579">
    <property type="reaction ID" value="UER00640"/>
</dbReference>
<dbReference type="Proteomes" id="UP000000584">
    <property type="component" value="Chromosome 1"/>
</dbReference>
<dbReference type="GO" id="GO:0005737">
    <property type="term" value="C:cytoplasm"/>
    <property type="evidence" value="ECO:0000318"/>
    <property type="project" value="GO_Central"/>
</dbReference>
<dbReference type="GO" id="GO:0005524">
    <property type="term" value="F:ATP binding"/>
    <property type="evidence" value="ECO:0007669"/>
    <property type="project" value="UniProtKB-UniRule"/>
</dbReference>
<dbReference type="GO" id="GO:0043771">
    <property type="term" value="F:cytidine kinase activity"/>
    <property type="evidence" value="ECO:0000318"/>
    <property type="project" value="GO_Central"/>
</dbReference>
<dbReference type="GO" id="GO:0004849">
    <property type="term" value="F:uridine kinase activity"/>
    <property type="evidence" value="ECO:0000318"/>
    <property type="project" value="GO_Central"/>
</dbReference>
<dbReference type="GO" id="GO:0044211">
    <property type="term" value="P:CTP salvage"/>
    <property type="evidence" value="ECO:0007669"/>
    <property type="project" value="UniProtKB-UniRule"/>
</dbReference>
<dbReference type="GO" id="GO:0044206">
    <property type="term" value="P:UMP salvage"/>
    <property type="evidence" value="ECO:0007669"/>
    <property type="project" value="UniProtKB-UniRule"/>
</dbReference>
<dbReference type="CDD" id="cd02023">
    <property type="entry name" value="UMPK"/>
    <property type="match status" value="1"/>
</dbReference>
<dbReference type="FunFam" id="3.40.50.300:FF:000252">
    <property type="entry name" value="Uridine kinase"/>
    <property type="match status" value="1"/>
</dbReference>
<dbReference type="Gene3D" id="3.40.50.300">
    <property type="entry name" value="P-loop containing nucleotide triphosphate hydrolases"/>
    <property type="match status" value="1"/>
</dbReference>
<dbReference type="HAMAP" id="MF_00551">
    <property type="entry name" value="Uridine_kinase"/>
    <property type="match status" value="1"/>
</dbReference>
<dbReference type="InterPro" id="IPR027417">
    <property type="entry name" value="P-loop_NTPase"/>
</dbReference>
<dbReference type="InterPro" id="IPR006083">
    <property type="entry name" value="PRK/URK"/>
</dbReference>
<dbReference type="InterPro" id="IPR026008">
    <property type="entry name" value="Uridine_kinase"/>
</dbReference>
<dbReference type="InterPro" id="IPR000764">
    <property type="entry name" value="Uridine_kinase-like"/>
</dbReference>
<dbReference type="NCBIfam" id="NF004018">
    <property type="entry name" value="PRK05480.1"/>
    <property type="match status" value="1"/>
</dbReference>
<dbReference type="NCBIfam" id="TIGR00235">
    <property type="entry name" value="udk"/>
    <property type="match status" value="1"/>
</dbReference>
<dbReference type="PANTHER" id="PTHR10285">
    <property type="entry name" value="URIDINE KINASE"/>
    <property type="match status" value="1"/>
</dbReference>
<dbReference type="Pfam" id="PF00485">
    <property type="entry name" value="PRK"/>
    <property type="match status" value="1"/>
</dbReference>
<dbReference type="PRINTS" id="PR00988">
    <property type="entry name" value="URIDINKINASE"/>
</dbReference>
<dbReference type="SUPFAM" id="SSF52540">
    <property type="entry name" value="P-loop containing nucleoside triphosphate hydrolases"/>
    <property type="match status" value="1"/>
</dbReference>
<gene>
    <name evidence="1" type="primary">udk</name>
    <name type="ordered locus">VC_1038</name>
</gene>
<reference key="1">
    <citation type="journal article" date="2000" name="Nature">
        <title>DNA sequence of both chromosomes of the cholera pathogen Vibrio cholerae.</title>
        <authorList>
            <person name="Heidelberg J.F."/>
            <person name="Eisen J.A."/>
            <person name="Nelson W.C."/>
            <person name="Clayton R.A."/>
            <person name="Gwinn M.L."/>
            <person name="Dodson R.J."/>
            <person name="Haft D.H."/>
            <person name="Hickey E.K."/>
            <person name="Peterson J.D."/>
            <person name="Umayam L.A."/>
            <person name="Gill S.R."/>
            <person name="Nelson K.E."/>
            <person name="Read T.D."/>
            <person name="Tettelin H."/>
            <person name="Richardson D.L."/>
            <person name="Ermolaeva M.D."/>
            <person name="Vamathevan J.J."/>
            <person name="Bass S."/>
            <person name="Qin H."/>
            <person name="Dragoi I."/>
            <person name="Sellers P."/>
            <person name="McDonald L.A."/>
            <person name="Utterback T.R."/>
            <person name="Fleischmann R.D."/>
            <person name="Nierman W.C."/>
            <person name="White O."/>
            <person name="Salzberg S.L."/>
            <person name="Smith H.O."/>
            <person name="Colwell R.R."/>
            <person name="Mekalanos J.J."/>
            <person name="Venter J.C."/>
            <person name="Fraser C.M."/>
        </authorList>
    </citation>
    <scope>NUCLEOTIDE SEQUENCE [LARGE SCALE GENOMIC DNA]</scope>
    <source>
        <strain>ATCC 39315 / El Tor Inaba N16961</strain>
    </source>
</reference>
<keyword id="KW-0067">ATP-binding</keyword>
<keyword id="KW-0963">Cytoplasm</keyword>
<keyword id="KW-0418">Kinase</keyword>
<keyword id="KW-0547">Nucleotide-binding</keyword>
<keyword id="KW-1185">Reference proteome</keyword>
<keyword id="KW-0808">Transferase</keyword>
<organism>
    <name type="scientific">Vibrio cholerae serotype O1 (strain ATCC 39315 / El Tor Inaba N16961)</name>
    <dbReference type="NCBI Taxonomy" id="243277"/>
    <lineage>
        <taxon>Bacteria</taxon>
        <taxon>Pseudomonadati</taxon>
        <taxon>Pseudomonadota</taxon>
        <taxon>Gammaproteobacteria</taxon>
        <taxon>Vibrionales</taxon>
        <taxon>Vibrionaceae</taxon>
        <taxon>Vibrio</taxon>
    </lineage>
</organism>
<comment type="catalytic activity">
    <reaction evidence="1">
        <text>uridine + ATP = UMP + ADP + H(+)</text>
        <dbReference type="Rhea" id="RHEA:16825"/>
        <dbReference type="ChEBI" id="CHEBI:15378"/>
        <dbReference type="ChEBI" id="CHEBI:16704"/>
        <dbReference type="ChEBI" id="CHEBI:30616"/>
        <dbReference type="ChEBI" id="CHEBI:57865"/>
        <dbReference type="ChEBI" id="CHEBI:456216"/>
        <dbReference type="EC" id="2.7.1.48"/>
    </reaction>
</comment>
<comment type="catalytic activity">
    <reaction evidence="1">
        <text>cytidine + ATP = CMP + ADP + H(+)</text>
        <dbReference type="Rhea" id="RHEA:24674"/>
        <dbReference type="ChEBI" id="CHEBI:15378"/>
        <dbReference type="ChEBI" id="CHEBI:17562"/>
        <dbReference type="ChEBI" id="CHEBI:30616"/>
        <dbReference type="ChEBI" id="CHEBI:60377"/>
        <dbReference type="ChEBI" id="CHEBI:456216"/>
        <dbReference type="EC" id="2.7.1.48"/>
    </reaction>
</comment>
<comment type="pathway">
    <text evidence="1">Pyrimidine metabolism; CTP biosynthesis via salvage pathway; CTP from cytidine: step 1/3.</text>
</comment>
<comment type="pathway">
    <text evidence="1">Pyrimidine metabolism; UMP biosynthesis via salvage pathway; UMP from uridine: step 1/1.</text>
</comment>
<comment type="subcellular location">
    <subcellularLocation>
        <location evidence="1">Cytoplasm</location>
    </subcellularLocation>
</comment>
<comment type="similarity">
    <text evidence="1">Belongs to the uridine kinase family.</text>
</comment>
<comment type="sequence caution" evidence="2">
    <conflict type="erroneous initiation">
        <sequence resource="EMBL-CDS" id="AAF94197"/>
    </conflict>
</comment>
<accession>Q9KT67</accession>
<evidence type="ECO:0000255" key="1">
    <source>
        <dbReference type="HAMAP-Rule" id="MF_00551"/>
    </source>
</evidence>
<evidence type="ECO:0000305" key="2"/>